<reference key="1">
    <citation type="journal article" date="2002" name="Nature">
        <title>Comparison of the genomes of two Xanthomonas pathogens with differing host specificities.</title>
        <authorList>
            <person name="da Silva A.C.R."/>
            <person name="Ferro J.A."/>
            <person name="Reinach F.C."/>
            <person name="Farah C.S."/>
            <person name="Furlan L.R."/>
            <person name="Quaggio R.B."/>
            <person name="Monteiro-Vitorello C.B."/>
            <person name="Van Sluys M.A."/>
            <person name="Almeida N.F. Jr."/>
            <person name="Alves L.M.C."/>
            <person name="do Amaral A.M."/>
            <person name="Bertolini M.C."/>
            <person name="Camargo L.E.A."/>
            <person name="Camarotte G."/>
            <person name="Cannavan F."/>
            <person name="Cardozo J."/>
            <person name="Chambergo F."/>
            <person name="Ciapina L.P."/>
            <person name="Cicarelli R.M.B."/>
            <person name="Coutinho L.L."/>
            <person name="Cursino-Santos J.R."/>
            <person name="El-Dorry H."/>
            <person name="Faria J.B."/>
            <person name="Ferreira A.J.S."/>
            <person name="Ferreira R.C.C."/>
            <person name="Ferro M.I.T."/>
            <person name="Formighieri E.F."/>
            <person name="Franco M.C."/>
            <person name="Greggio C.C."/>
            <person name="Gruber A."/>
            <person name="Katsuyama A.M."/>
            <person name="Kishi L.T."/>
            <person name="Leite R.P."/>
            <person name="Lemos E.G.M."/>
            <person name="Lemos M.V.F."/>
            <person name="Locali E.C."/>
            <person name="Machado M.A."/>
            <person name="Madeira A.M.B.N."/>
            <person name="Martinez-Rossi N.M."/>
            <person name="Martins E.C."/>
            <person name="Meidanis J."/>
            <person name="Menck C.F.M."/>
            <person name="Miyaki C.Y."/>
            <person name="Moon D.H."/>
            <person name="Moreira L.M."/>
            <person name="Novo M.T.M."/>
            <person name="Okura V.K."/>
            <person name="Oliveira M.C."/>
            <person name="Oliveira V.R."/>
            <person name="Pereira H.A."/>
            <person name="Rossi A."/>
            <person name="Sena J.A.D."/>
            <person name="Silva C."/>
            <person name="de Souza R.F."/>
            <person name="Spinola L.A.F."/>
            <person name="Takita M.A."/>
            <person name="Tamura R.E."/>
            <person name="Teixeira E.C."/>
            <person name="Tezza R.I.D."/>
            <person name="Trindade dos Santos M."/>
            <person name="Truffi D."/>
            <person name="Tsai S.M."/>
            <person name="White F.F."/>
            <person name="Setubal J.C."/>
            <person name="Kitajima J.P."/>
        </authorList>
    </citation>
    <scope>NUCLEOTIDE SEQUENCE [LARGE SCALE GENOMIC DNA]</scope>
    <source>
        <strain>ATCC 33913 / DSM 3586 / NCPPB 528 / LMG 568 / P 25</strain>
    </source>
</reference>
<reference key="2">
    <citation type="journal article" date="2011" name="J. Biol. Chem.">
        <title>Purification and characterization of OleA from Xanthomonas campestris and demonstration of a non-decarboxylative Claisen condensation reaction.</title>
        <authorList>
            <person name="Frias J.A."/>
            <person name="Richman J.E."/>
            <person name="Erickson J.S."/>
            <person name="Wackett L.P."/>
        </authorList>
    </citation>
    <scope>FUNCTION</scope>
    <scope>CATALYTIC ACTIVITY</scope>
    <scope>SUBUNIT</scope>
    <source>
        <strain>ATCC 33913 / DSM 3586 / NCPPB 528 / LMG 568 / P 25</strain>
    </source>
</reference>
<reference key="3">
    <citation type="journal article" date="2017" name="J. Bacteriol.">
        <title>Active multienzyme assemblies for long-chain olefinic hydrocarbon biosynthesis.</title>
        <authorList>
            <person name="Christenson J.K."/>
            <person name="Jensen M.R."/>
            <person name="Goblirsch B.R."/>
            <person name="Mohamed F."/>
            <person name="Zhang W."/>
            <person name="Wilmot C.M."/>
            <person name="Wackett L.P."/>
        </authorList>
    </citation>
    <scope>FUNCTION</scope>
    <scope>SUBUNIT</scope>
    <scope>SUBCELLULAR LOCATION</scope>
    <source>
        <strain>ATCC 33913 / DSM 3586 / NCPPB 528 / LMG 568 / P 25</strain>
    </source>
</reference>
<reference evidence="17 18 19 20 21" key="4">
    <citation type="journal article" date="2012" name="Biochemistry">
        <title>Crystal structures of Xanthomonas campestris OleA reveal features that promote head-to-head condensation of two long-chain fatty acids.</title>
        <authorList>
            <person name="Goblirsch B.R."/>
            <person name="Frias J.A."/>
            <person name="Wackett L.P."/>
            <person name="Wilmot C.M."/>
        </authorList>
    </citation>
    <scope>X-RAY CRYSTALLOGRAPHY (1.70 ANGSTROMS) OF APOENZYME AND IN COMPLEXES WITH MANGANESE AND CERULENIN</scope>
    <scope>FUNCTION</scope>
    <scope>CATALYTIC ACTIVITY</scope>
    <scope>ACTIVITY REGULATION</scope>
    <scope>SUBUNIT</scope>
    <scope>ACTIVE SITE</scope>
</reference>
<reference evidence="16 22 23 24 25" key="5">
    <citation type="journal article" date="2016" name="J. Biol. Chem.">
        <title>Substrate trapping in crystals of the thiolase OleA identifies three channels that enable long chain olefin biosynthesis.</title>
        <authorList>
            <person name="Goblirsch B.R."/>
            <person name="Jensen M.R."/>
            <person name="Mohamed F.A."/>
            <person name="Wackett L.P."/>
            <person name="Wilmot C.M."/>
        </authorList>
    </citation>
    <scope>X-RAY CRYSTALLOGRAPHY (1.84 ANGSTROMS) OF MUTANTS ALA-123 AND SER-123 IN COMPLEXES WITH SUBSTRATE</scope>
    <scope>FUNCTION</scope>
    <scope>CATALYTIC ACTIVITY</scope>
    <scope>SUBUNIT</scope>
    <scope>DOMAIN</scope>
    <scope>MUTAGENESIS OF CYS-123</scope>
    <scope>ACTIVE SITE</scope>
    <source>
        <strain>ATCC 33913 / DSM 3586 / NCPPB 528 / LMG 568 / P 25</strain>
    </source>
</reference>
<reference evidence="26 27 28 29 30 31" key="6">
    <citation type="journal article" date="2017" name="Biochem. J.">
        <title>OleA Glu117 is key to condensation of two fatty-acyl coenzyme A substrates in long-chain olefin biosynthesis.</title>
        <authorList>
            <person name="Jensen M.R."/>
            <person name="Goblirsch B.R."/>
            <person name="Christenson J.K."/>
            <person name="Esler M.A."/>
            <person name="Mohamed F.A."/>
            <person name="Wackett L.P."/>
            <person name="Wilmot C.M."/>
        </authorList>
    </citation>
    <scope>X-RAY CRYSTALLOGRAPHY (1.66 ANGSTROMS) OF MUTANTS ALA-97; GLN-97 AND ASP-97 IN APO FORM AND IN COMPLEXES WITH MANGANESE AND CERULENIN</scope>
    <scope>ACTIVITY REGULATION</scope>
    <scope>SUBUNIT</scope>
    <scope>DOMAIN</scope>
    <scope>MUTAGENESIS OF GLU-97</scope>
    <scope>ACTIVE SITE</scope>
    <source>
        <strain>ATCC 33913 / DSM 3586 / NCPPB 528 / LMG 568 / P 25</strain>
    </source>
</reference>
<reference evidence="35" key="7">
    <citation type="submission" date="2017-09" db="PDB data bank">
        <title>The role of OleA His285 in substrate coordination of long-chain acyl-CoA.</title>
        <authorList>
            <person name="Jensen M.R."/>
            <person name="Goblirsch B.R."/>
            <person name="Esler M.A."/>
            <person name="Christenson J.K."/>
            <person name="Mohamed F.A."/>
            <person name="Wackett L.P."/>
            <person name="Wilmot C.M."/>
        </authorList>
    </citation>
    <scope>X-RAY CRYSTALLOGRAPHY (2.04 ANGSTROMS) IN COMPLEX WITH MANGANESE AND CERULENIN</scope>
</reference>
<reference evidence="32 33 34" key="8">
    <citation type="journal article" date="2018" name="FEBS Lett.">
        <title>The role of OleA His285 in orchestration of long-chain acyl-coenzyme A substrates.</title>
        <authorList>
            <person name="Jensen M.R."/>
            <person name="Goblirsch B.R."/>
            <person name="Esler M.A."/>
            <person name="Christenson J.K."/>
            <person name="Mohamed F.A."/>
            <person name="Wackett L.P."/>
            <person name="Wilmot C.M."/>
        </authorList>
    </citation>
    <scope>X-RAY CRYSTALLOGRAPHY (1.77 ANGSTROMS) OF MUTANTS ALA-265; ASN-265 AND ASP-265</scope>
    <scope>MUTAGENESIS OF HIS-265</scope>
    <source>
        <strain>ATCC 33913 / DSM 3586 / NCPPB 528 / LMG 568 / P 25</strain>
    </source>
</reference>
<protein>
    <recommendedName>
        <fullName evidence="9">Acyl-CoA:acyl-CoA alkyltransferase</fullName>
        <ecNumber evidence="1 2 3">2.3.3.20</ecNumber>
    </recommendedName>
</protein>
<accession>Q8PDX2</accession>
<sequence>MLFQNVSIAGLAHIDAPHTLTSKEINERLQPTYDRLGIKTDVLGDVAGIHARRLWDQDVQASDAATQAARKALIDANIGIEKIGLLINTSVSRDYLEPSTASIVSGNLGVSDHCMTFDVANACLAFINGMDIAARMLERGEIDYALVVDGETANLVYEKTLERMTSPDVTEEEFRNELAALTLGCGAAAMVMARSELVPDAPRYKGGVTRSATEWNKLCRGNLDRMVTDTRLLLIEGIKLAQKTFVAAKQVLGWAVEELDQFVIHQVSRPHTAAFVKSFGIDPAKVMTIFGEHGNIGPASVPIVLSKLKELGRLKKGDRIALLGIGSGLNCSMAEVVW</sequence>
<dbReference type="EC" id="2.3.3.20" evidence="1 2 3"/>
<dbReference type="EMBL" id="AE008922">
    <property type="protein sequence ID" value="AAM39531.1"/>
    <property type="molecule type" value="Genomic_DNA"/>
</dbReference>
<dbReference type="RefSeq" id="NP_635607.1">
    <property type="nucleotide sequence ID" value="NC_003902.1"/>
</dbReference>
<dbReference type="RefSeq" id="WP_011035468.1">
    <property type="nucleotide sequence ID" value="NC_003902.1"/>
</dbReference>
<dbReference type="PDB" id="3ROW">
    <property type="method" value="X-ray"/>
    <property type="resolution" value="1.85 A"/>
    <property type="chains" value="A/B=1-338"/>
</dbReference>
<dbReference type="PDB" id="3S1Z">
    <property type="method" value="X-ray"/>
    <property type="resolution" value="2.05 A"/>
    <property type="chains" value="A/B=1-338"/>
</dbReference>
<dbReference type="PDB" id="3S20">
    <property type="method" value="X-ray"/>
    <property type="resolution" value="1.88 A"/>
    <property type="chains" value="A/B=1-338"/>
</dbReference>
<dbReference type="PDB" id="3S21">
    <property type="method" value="X-ray"/>
    <property type="resolution" value="1.70 A"/>
    <property type="chains" value="A=1-338"/>
</dbReference>
<dbReference type="PDB" id="3S23">
    <property type="method" value="X-ray"/>
    <property type="resolution" value="1.95 A"/>
    <property type="chains" value="A=1-338"/>
</dbReference>
<dbReference type="PDB" id="4KTI">
    <property type="method" value="X-ray"/>
    <property type="resolution" value="1.84 A"/>
    <property type="chains" value="A/B=1-338"/>
</dbReference>
<dbReference type="PDB" id="4KTM">
    <property type="method" value="X-ray"/>
    <property type="resolution" value="2.36 A"/>
    <property type="chains" value="A/B=1-338"/>
</dbReference>
<dbReference type="PDB" id="4KU2">
    <property type="method" value="X-ray"/>
    <property type="resolution" value="1.97 A"/>
    <property type="chains" value="A/B=1-338"/>
</dbReference>
<dbReference type="PDB" id="4KU3">
    <property type="method" value="X-ray"/>
    <property type="resolution" value="1.97 A"/>
    <property type="chains" value="A/B=1-338"/>
</dbReference>
<dbReference type="PDB" id="4KU5">
    <property type="method" value="X-ray"/>
    <property type="resolution" value="2.17 A"/>
    <property type="chains" value="A/B=1-338"/>
</dbReference>
<dbReference type="PDB" id="5VXD">
    <property type="method" value="X-ray"/>
    <property type="resolution" value="1.97 A"/>
    <property type="chains" value="A/B=1-338"/>
</dbReference>
<dbReference type="PDB" id="5VXE">
    <property type="method" value="X-ray"/>
    <property type="resolution" value="1.66 A"/>
    <property type="chains" value="A=1-338"/>
</dbReference>
<dbReference type="PDB" id="5VXF">
    <property type="method" value="X-ray"/>
    <property type="resolution" value="1.75 A"/>
    <property type="chains" value="A/B=1-338"/>
</dbReference>
<dbReference type="PDB" id="5VXG">
    <property type="method" value="X-ray"/>
    <property type="resolution" value="2.07 A"/>
    <property type="chains" value="A=1-338"/>
</dbReference>
<dbReference type="PDB" id="5VXH">
    <property type="method" value="X-ray"/>
    <property type="resolution" value="1.84 A"/>
    <property type="chains" value="A/B=1-338"/>
</dbReference>
<dbReference type="PDB" id="5VXI">
    <property type="method" value="X-ray"/>
    <property type="resolution" value="2.08 A"/>
    <property type="chains" value="A=1-338"/>
</dbReference>
<dbReference type="PDB" id="6B2R">
    <property type="method" value="X-ray"/>
    <property type="resolution" value="1.77 A"/>
    <property type="chains" value="A/B=1-338"/>
</dbReference>
<dbReference type="PDB" id="6B2S">
    <property type="method" value="X-ray"/>
    <property type="resolution" value="2.00 A"/>
    <property type="chains" value="A/B=1-338"/>
</dbReference>
<dbReference type="PDB" id="6B2T">
    <property type="method" value="X-ray"/>
    <property type="resolution" value="2.80 A"/>
    <property type="chains" value="A/B=1-338"/>
</dbReference>
<dbReference type="PDB" id="6B2U">
    <property type="method" value="X-ray"/>
    <property type="resolution" value="2.04 A"/>
    <property type="chains" value="A=1-338"/>
</dbReference>
<dbReference type="PDBsum" id="3ROW"/>
<dbReference type="PDBsum" id="3S1Z"/>
<dbReference type="PDBsum" id="3S20"/>
<dbReference type="PDBsum" id="3S21"/>
<dbReference type="PDBsum" id="3S23"/>
<dbReference type="PDBsum" id="4KTI"/>
<dbReference type="PDBsum" id="4KTM"/>
<dbReference type="PDBsum" id="4KU2"/>
<dbReference type="PDBsum" id="4KU3"/>
<dbReference type="PDBsum" id="4KU5"/>
<dbReference type="PDBsum" id="5VXD"/>
<dbReference type="PDBsum" id="5VXE"/>
<dbReference type="PDBsum" id="5VXF"/>
<dbReference type="PDBsum" id="5VXG"/>
<dbReference type="PDBsum" id="5VXH"/>
<dbReference type="PDBsum" id="5VXI"/>
<dbReference type="PDBsum" id="6B2R"/>
<dbReference type="PDBsum" id="6B2S"/>
<dbReference type="PDBsum" id="6B2T"/>
<dbReference type="PDBsum" id="6B2U"/>
<dbReference type="SMR" id="Q8PDX2"/>
<dbReference type="STRING" id="190485.XCC0212"/>
<dbReference type="EnsemblBacteria" id="AAM39531">
    <property type="protein sequence ID" value="AAM39531"/>
    <property type="gene ID" value="XCC0212"/>
</dbReference>
<dbReference type="KEGG" id="xcc:XCC0212"/>
<dbReference type="PATRIC" id="fig|190485.4.peg.238"/>
<dbReference type="eggNOG" id="COG0332">
    <property type="taxonomic scope" value="Bacteria"/>
</dbReference>
<dbReference type="HOGENOM" id="CLU_039592_4_2_6"/>
<dbReference type="OrthoDB" id="9788274at2"/>
<dbReference type="BioCyc" id="MetaCyc:MONOMER-20170"/>
<dbReference type="BRENDA" id="2.3.3.20">
    <property type="organism ID" value="9230"/>
</dbReference>
<dbReference type="EvolutionaryTrace" id="Q8PDX2"/>
<dbReference type="Proteomes" id="UP000001010">
    <property type="component" value="Chromosome"/>
</dbReference>
<dbReference type="GO" id="GO:0005737">
    <property type="term" value="C:cytoplasm"/>
    <property type="evidence" value="ECO:0007669"/>
    <property type="project" value="UniProtKB-SubCell"/>
</dbReference>
<dbReference type="GO" id="GO:0004315">
    <property type="term" value="F:3-oxoacyl-[acyl-carrier-protein] synthase activity"/>
    <property type="evidence" value="ECO:0007669"/>
    <property type="project" value="InterPro"/>
</dbReference>
<dbReference type="GO" id="GO:0046872">
    <property type="term" value="F:metal ion binding"/>
    <property type="evidence" value="ECO:0007669"/>
    <property type="project" value="UniProtKB-KW"/>
</dbReference>
<dbReference type="GO" id="GO:0006633">
    <property type="term" value="P:fatty acid biosynthetic process"/>
    <property type="evidence" value="ECO:0007669"/>
    <property type="project" value="InterPro"/>
</dbReference>
<dbReference type="GO" id="GO:0044550">
    <property type="term" value="P:secondary metabolite biosynthetic process"/>
    <property type="evidence" value="ECO:0000318"/>
    <property type="project" value="GO_Central"/>
</dbReference>
<dbReference type="CDD" id="cd00830">
    <property type="entry name" value="KAS_III"/>
    <property type="match status" value="1"/>
</dbReference>
<dbReference type="FunFam" id="3.40.47.10:FF:000037">
    <property type="entry name" value="3-oxoacyl-ACP synthase III"/>
    <property type="match status" value="1"/>
</dbReference>
<dbReference type="FunFam" id="3.40.47.10:FF:000055">
    <property type="entry name" value="3-oxoacyl-ACP synthase III"/>
    <property type="match status" value="1"/>
</dbReference>
<dbReference type="Gene3D" id="3.40.47.10">
    <property type="match status" value="2"/>
</dbReference>
<dbReference type="InterPro" id="IPR013747">
    <property type="entry name" value="ACP_syn_III_C"/>
</dbReference>
<dbReference type="InterPro" id="IPR013751">
    <property type="entry name" value="ACP_syn_III_N"/>
</dbReference>
<dbReference type="InterPro" id="IPR016039">
    <property type="entry name" value="Thiolase-like"/>
</dbReference>
<dbReference type="NCBIfam" id="NF006720">
    <property type="entry name" value="PRK09258.1"/>
    <property type="match status" value="1"/>
</dbReference>
<dbReference type="PANTHER" id="PTHR34069">
    <property type="entry name" value="3-OXOACYL-[ACYL-CARRIER-PROTEIN] SYNTHASE 3"/>
    <property type="match status" value="1"/>
</dbReference>
<dbReference type="PANTHER" id="PTHR34069:SF3">
    <property type="entry name" value="ACYL-COA:ACYL-COA ALKYLTRANSFERASE"/>
    <property type="match status" value="1"/>
</dbReference>
<dbReference type="Pfam" id="PF08545">
    <property type="entry name" value="ACP_syn_III"/>
    <property type="match status" value="1"/>
</dbReference>
<dbReference type="Pfam" id="PF08541">
    <property type="entry name" value="ACP_syn_III_C"/>
    <property type="match status" value="1"/>
</dbReference>
<dbReference type="SUPFAM" id="SSF53901">
    <property type="entry name" value="Thiolase-like"/>
    <property type="match status" value="1"/>
</dbReference>
<keyword id="KW-0002">3D-structure</keyword>
<keyword id="KW-0012">Acyltransferase</keyword>
<keyword id="KW-0963">Cytoplasm</keyword>
<keyword id="KW-0464">Manganese</keyword>
<keyword id="KW-0479">Metal-binding</keyword>
<keyword id="KW-1185">Reference proteome</keyword>
<keyword id="KW-0808">Transferase</keyword>
<gene>
    <name evidence="8" type="primary">oleA</name>
    <name evidence="15" type="ordered locus">XCC0212</name>
</gene>
<proteinExistence type="evidence at protein level"/>
<name>OLEA_XANCP</name>
<organism>
    <name type="scientific">Xanthomonas campestris pv. campestris (strain ATCC 33913 / DSM 3586 / NCPPB 528 / LMG 568 / P 25)</name>
    <dbReference type="NCBI Taxonomy" id="190485"/>
    <lineage>
        <taxon>Bacteria</taxon>
        <taxon>Pseudomonadati</taxon>
        <taxon>Pseudomonadota</taxon>
        <taxon>Gammaproteobacteria</taxon>
        <taxon>Lysobacterales</taxon>
        <taxon>Lysobacteraceae</taxon>
        <taxon>Xanthomonas</taxon>
    </lineage>
</organism>
<feature type="chain" id="PRO_0000446912" description="Acyl-CoA:acyl-CoA alkyltransferase">
    <location>
        <begin position="1"/>
        <end position="338"/>
    </location>
</feature>
<feature type="active site" description="Proton acceptor" evidence="10 11 13">
    <location>
        <position position="97"/>
    </location>
</feature>
<feature type="active site" description="Acyl-thioester intermediate" evidence="10 11 13">
    <location>
        <position position="123"/>
    </location>
</feature>
<feature type="binding site" evidence="2 5 7">
    <location>
        <position position="18"/>
    </location>
    <ligand>
        <name>Mn(2+)</name>
        <dbReference type="ChEBI" id="CHEBI:29035"/>
    </ligand>
</feature>
<feature type="binding site" evidence="2 5 7">
    <location>
        <position position="56"/>
    </location>
    <ligand>
        <name>Mn(2+)</name>
        <dbReference type="ChEBI" id="CHEBI:29035"/>
    </ligand>
</feature>
<feature type="site" description="Important for activity" evidence="14">
    <location>
        <position position="265"/>
    </location>
</feature>
<feature type="mutagenesis site" description="Hydrolyzes 27% of the substrate after incubation for 24 hours. Cannot form the beta-keto acid product." evidence="5">
    <original>E</original>
    <variation>A</variation>
    <location>
        <position position="97"/>
    </location>
</feature>
<feature type="mutagenesis site" description="Hydrolyzes 50% of the substrate after incubation for 24 hours. Decrease in the formation of the beta-keto acid product." evidence="5">
    <original>E</original>
    <variation>D</variation>
    <location>
        <position position="97"/>
    </location>
</feature>
<feature type="mutagenesis site" description="Hydrolyzes 24% of the substrate after incubation for 24 hours. Cannot form the beta-keto acid product." evidence="5">
    <original>E</original>
    <variation>Q</variation>
    <location>
        <position position="97"/>
    </location>
</feature>
<feature type="mutagenesis site" description="Strong decrease in activity. Displays measurable CoA release only after incubation for 24 hours." evidence="3">
    <original>C</original>
    <variation>A</variation>
    <variation>S</variation>
    <location>
        <position position="123"/>
    </location>
</feature>
<feature type="mutagenesis site" description="No change in substrate hydrolysis rate. Cannot form the beta-keto acid product." evidence="6">
    <original>H</original>
    <variation>A</variation>
    <variation>N</variation>
    <location>
        <position position="265"/>
    </location>
</feature>
<feature type="mutagenesis site" description="Hydrolyzes 91% of the substrate after incubation for 24 hours. Cannot form the beta-keto acid product." evidence="6">
    <original>H</original>
    <variation>D</variation>
    <location>
        <position position="265"/>
    </location>
</feature>
<feature type="strand" evidence="36">
    <location>
        <begin position="4"/>
        <end position="15"/>
    </location>
</feature>
<feature type="strand" evidence="36">
    <location>
        <begin position="17"/>
        <end position="21"/>
    </location>
</feature>
<feature type="helix" evidence="36">
    <location>
        <begin position="22"/>
        <end position="36"/>
    </location>
</feature>
<feature type="helix" evidence="36">
    <location>
        <begin position="42"/>
        <end position="45"/>
    </location>
</feature>
<feature type="strand" evidence="36">
    <location>
        <begin position="50"/>
        <end position="54"/>
    </location>
</feature>
<feature type="helix" evidence="36">
    <location>
        <begin position="61"/>
        <end position="76"/>
    </location>
</feature>
<feature type="helix" evidence="36">
    <location>
        <begin position="80"/>
        <end position="82"/>
    </location>
</feature>
<feature type="strand" evidence="36">
    <location>
        <begin position="85"/>
        <end position="88"/>
    </location>
</feature>
<feature type="strand" evidence="36">
    <location>
        <begin position="96"/>
        <end position="98"/>
    </location>
</feature>
<feature type="helix" evidence="36">
    <location>
        <begin position="100"/>
        <end position="108"/>
    </location>
</feature>
<feature type="strand" evidence="36">
    <location>
        <begin position="115"/>
        <end position="118"/>
    </location>
</feature>
<feature type="helix" evidence="36">
    <location>
        <begin position="122"/>
        <end position="124"/>
    </location>
</feature>
<feature type="helix" evidence="36">
    <location>
        <begin position="125"/>
        <end position="138"/>
    </location>
</feature>
<feature type="strand" evidence="36">
    <location>
        <begin position="143"/>
        <end position="151"/>
    </location>
</feature>
<feature type="helix" evidence="36">
    <location>
        <begin position="154"/>
        <end position="163"/>
    </location>
</feature>
<feature type="strand" evidence="38">
    <location>
        <begin position="166"/>
        <end position="168"/>
    </location>
</feature>
<feature type="helix" evidence="36">
    <location>
        <begin position="171"/>
        <end position="178"/>
    </location>
</feature>
<feature type="helix" evidence="36">
    <location>
        <begin position="179"/>
        <end position="182"/>
    </location>
</feature>
<feature type="strand" evidence="36">
    <location>
        <begin position="186"/>
        <end position="194"/>
    </location>
</feature>
<feature type="helix" evidence="36">
    <location>
        <begin position="195"/>
        <end position="197"/>
    </location>
</feature>
<feature type="strand" evidence="36">
    <location>
        <begin position="203"/>
        <end position="211"/>
    </location>
</feature>
<feature type="helix" evidence="36">
    <location>
        <begin position="213"/>
        <end position="215"/>
    </location>
</feature>
<feature type="strand" evidence="37">
    <location>
        <begin position="218"/>
        <end position="221"/>
    </location>
</feature>
<feature type="strand" evidence="37">
    <location>
        <begin position="226"/>
        <end position="228"/>
    </location>
</feature>
<feature type="helix" evidence="36">
    <location>
        <begin position="231"/>
        <end position="252"/>
    </location>
</feature>
<feature type="helix" evidence="36">
    <location>
        <begin position="256"/>
        <end position="258"/>
    </location>
</feature>
<feature type="strand" evidence="36">
    <location>
        <begin position="260"/>
        <end position="264"/>
    </location>
</feature>
<feature type="helix" evidence="36">
    <location>
        <begin position="269"/>
        <end position="279"/>
    </location>
</feature>
<feature type="helix" evidence="36">
    <location>
        <begin position="283"/>
        <end position="285"/>
    </location>
</feature>
<feature type="helix" evidence="36">
    <location>
        <begin position="290"/>
        <end position="293"/>
    </location>
</feature>
<feature type="helix" evidence="36">
    <location>
        <begin position="297"/>
        <end position="299"/>
    </location>
</feature>
<feature type="helix" evidence="36">
    <location>
        <begin position="300"/>
        <end position="310"/>
    </location>
</feature>
<feature type="strand" evidence="36">
    <location>
        <begin position="319"/>
        <end position="326"/>
    </location>
</feature>
<feature type="turn" evidence="36">
    <location>
        <begin position="327"/>
        <end position="329"/>
    </location>
</feature>
<feature type="strand" evidence="36">
    <location>
        <begin position="330"/>
        <end position="337"/>
    </location>
</feature>
<evidence type="ECO:0000269" key="1">
    <source>
    </source>
</evidence>
<evidence type="ECO:0000269" key="2">
    <source>
    </source>
</evidence>
<evidence type="ECO:0000269" key="3">
    <source>
    </source>
</evidence>
<evidence type="ECO:0000269" key="4">
    <source>
    </source>
</evidence>
<evidence type="ECO:0000269" key="5">
    <source>
    </source>
</evidence>
<evidence type="ECO:0000269" key="6">
    <source>
    </source>
</evidence>
<evidence type="ECO:0000269" key="7">
    <source ref="7"/>
</evidence>
<evidence type="ECO:0000303" key="8">
    <source>
    </source>
</evidence>
<evidence type="ECO:0000305" key="9"/>
<evidence type="ECO:0000305" key="10">
    <source>
    </source>
</evidence>
<evidence type="ECO:0000305" key="11">
    <source>
    </source>
</evidence>
<evidence type="ECO:0000305" key="12">
    <source>
    </source>
</evidence>
<evidence type="ECO:0000305" key="13">
    <source>
    </source>
</evidence>
<evidence type="ECO:0000305" key="14">
    <source>
    </source>
</evidence>
<evidence type="ECO:0000312" key="15">
    <source>
        <dbReference type="EMBL" id="AAM39531.1"/>
    </source>
</evidence>
<evidence type="ECO:0000312" key="16">
    <source>
        <dbReference type="PDB" id="4KU5"/>
    </source>
</evidence>
<evidence type="ECO:0007744" key="17">
    <source>
        <dbReference type="PDB" id="3ROW"/>
    </source>
</evidence>
<evidence type="ECO:0007744" key="18">
    <source>
        <dbReference type="PDB" id="3S1Z"/>
    </source>
</evidence>
<evidence type="ECO:0007744" key="19">
    <source>
        <dbReference type="PDB" id="3S20"/>
    </source>
</evidence>
<evidence type="ECO:0007744" key="20">
    <source>
        <dbReference type="PDB" id="3S21"/>
    </source>
</evidence>
<evidence type="ECO:0007744" key="21">
    <source>
        <dbReference type="PDB" id="3S23"/>
    </source>
</evidence>
<evidence type="ECO:0007744" key="22">
    <source>
        <dbReference type="PDB" id="4KTI"/>
    </source>
</evidence>
<evidence type="ECO:0007744" key="23">
    <source>
        <dbReference type="PDB" id="4KTM"/>
    </source>
</evidence>
<evidence type="ECO:0007744" key="24">
    <source>
        <dbReference type="PDB" id="4KU2"/>
    </source>
</evidence>
<evidence type="ECO:0007744" key="25">
    <source>
        <dbReference type="PDB" id="4KU3"/>
    </source>
</evidence>
<evidence type="ECO:0007744" key="26">
    <source>
        <dbReference type="PDB" id="5VXD"/>
    </source>
</evidence>
<evidence type="ECO:0007744" key="27">
    <source>
        <dbReference type="PDB" id="5VXE"/>
    </source>
</evidence>
<evidence type="ECO:0007744" key="28">
    <source>
        <dbReference type="PDB" id="5VXF"/>
    </source>
</evidence>
<evidence type="ECO:0007744" key="29">
    <source>
        <dbReference type="PDB" id="5VXG"/>
    </source>
</evidence>
<evidence type="ECO:0007744" key="30">
    <source>
        <dbReference type="PDB" id="5VXH"/>
    </source>
</evidence>
<evidence type="ECO:0007744" key="31">
    <source>
        <dbReference type="PDB" id="5VXI"/>
    </source>
</evidence>
<evidence type="ECO:0007744" key="32">
    <source>
        <dbReference type="PDB" id="6B2R"/>
    </source>
</evidence>
<evidence type="ECO:0007744" key="33">
    <source>
        <dbReference type="PDB" id="6B2S"/>
    </source>
</evidence>
<evidence type="ECO:0007744" key="34">
    <source>
        <dbReference type="PDB" id="6B2T"/>
    </source>
</evidence>
<evidence type="ECO:0007744" key="35">
    <source>
        <dbReference type="PDB" id="6B2U"/>
    </source>
</evidence>
<evidence type="ECO:0007829" key="36">
    <source>
        <dbReference type="PDB" id="5VXE"/>
    </source>
</evidence>
<evidence type="ECO:0007829" key="37">
    <source>
        <dbReference type="PDB" id="5VXF"/>
    </source>
</evidence>
<evidence type="ECO:0007829" key="38">
    <source>
        <dbReference type="PDB" id="6B2T"/>
    </source>
</evidence>
<comment type="function">
    <text evidence="1 2 3 4">Involved in olefin biosynthesis (PubMed:21266575, PubMed:22524624, PubMed:27815501, PubMed:28223313). Catalyzes a non-decarboxylative head-to-head Claisen condensation of two acyl-CoA molecules, generating an (R)-2-alkyl-3-oxoalkanoate (PubMed:21266575, PubMed:22524624, PubMed:27815501). Is active with fatty acyl-CoA substrates that ranged from C(8) to C(16) in length, and is the most active with palmitoyl-CoA and myristoyl-CoA (PubMed:21266575).</text>
</comment>
<comment type="catalytic activity">
    <reaction evidence="1 2 3">
        <text>a 1,2-saturated acyl-CoA + an acyl-CoA + H2O = an (R)-2-alkyl-3-oxoalkanoate + 2 CoA + H(+)</text>
        <dbReference type="Rhea" id="RHEA:55980"/>
        <dbReference type="ChEBI" id="CHEBI:15377"/>
        <dbReference type="ChEBI" id="CHEBI:15378"/>
        <dbReference type="ChEBI" id="CHEBI:57287"/>
        <dbReference type="ChEBI" id="CHEBI:58342"/>
        <dbReference type="ChEBI" id="CHEBI:138341"/>
        <dbReference type="ChEBI" id="CHEBI:142092"/>
        <dbReference type="EC" id="2.3.3.20"/>
    </reaction>
    <physiologicalReaction direction="left-to-right" evidence="1 2 3">
        <dbReference type="Rhea" id="RHEA:55981"/>
    </physiologicalReaction>
</comment>
<comment type="activity regulation">
    <text evidence="2 5">Inhibited by cerulenin.</text>
</comment>
<comment type="subunit">
    <text evidence="1 2 3 4 5">Homodimer (PubMed:21266575, PubMed:22524624, PubMed:27815501, PubMed:28223313, PubMed:29025976). Weakly associates with the OleBCD complex (PubMed:28223313).</text>
</comment>
<comment type="subcellular location">
    <subcellularLocation>
        <location evidence="12">Cytoplasm</location>
    </subcellularLocation>
</comment>
<comment type="domain">
    <text evidence="3 5">Contains three extended channels that together form a T-shaped, three-channel nexus (PubMed:27815501). Contains an active site base originating from the second monomer of the dimer (PubMed:29025976).</text>
</comment>
<comment type="similarity">
    <text evidence="9">Belongs to the thiolase-like superfamily. OleA family.</text>
</comment>